<dbReference type="EC" id="3.1.13.4"/>
<dbReference type="EMBL" id="AB025639">
    <property type="protein sequence ID" value="BAB01314.1"/>
    <property type="status" value="ALT_SEQ"/>
    <property type="molecule type" value="Genomic_DNA"/>
</dbReference>
<dbReference type="EMBL" id="CP002686">
    <property type="protein sequence ID" value="AEE77010.1"/>
    <property type="molecule type" value="Genomic_DNA"/>
</dbReference>
<dbReference type="EMBL" id="AY062664">
    <property type="protein sequence ID" value="AAL32742.1"/>
    <property type="molecule type" value="mRNA"/>
</dbReference>
<dbReference type="EMBL" id="BT008385">
    <property type="protein sequence ID" value="AAP37744.1"/>
    <property type="molecule type" value="mRNA"/>
</dbReference>
<dbReference type="RefSeq" id="NP_189170.1">
    <property type="nucleotide sequence ID" value="NM_113439.3"/>
</dbReference>
<dbReference type="SMR" id="Q8W4C3"/>
<dbReference type="FunCoup" id="Q8W4C3">
    <property type="interactions" value="3039"/>
</dbReference>
<dbReference type="STRING" id="3702.Q8W4C3"/>
<dbReference type="PaxDb" id="3702-AT3G25430.1"/>
<dbReference type="ProteomicsDB" id="236357"/>
<dbReference type="EnsemblPlants" id="AT3G25430.1">
    <property type="protein sequence ID" value="AT3G25430.1"/>
    <property type="gene ID" value="AT3G25430"/>
</dbReference>
<dbReference type="GeneID" id="822127"/>
<dbReference type="Gramene" id="AT3G25430.1">
    <property type="protein sequence ID" value="AT3G25430.1"/>
    <property type="gene ID" value="AT3G25430"/>
</dbReference>
<dbReference type="KEGG" id="ath:AT3G25430"/>
<dbReference type="Araport" id="AT3G25430"/>
<dbReference type="TAIR" id="AT3G25430"/>
<dbReference type="eggNOG" id="KOG1990">
    <property type="taxonomic scope" value="Eukaryota"/>
</dbReference>
<dbReference type="HOGENOM" id="CLU_020384_1_0_1"/>
<dbReference type="InParanoid" id="Q8W4C3"/>
<dbReference type="OMA" id="SRVKHWK"/>
<dbReference type="PhylomeDB" id="Q8W4C3"/>
<dbReference type="PRO" id="PR:Q8W4C3"/>
<dbReference type="Proteomes" id="UP000006548">
    <property type="component" value="Chromosome 3"/>
</dbReference>
<dbReference type="ExpressionAtlas" id="Q8W4C3">
    <property type="expression patterns" value="baseline and differential"/>
</dbReference>
<dbReference type="GO" id="GO:0005737">
    <property type="term" value="C:cytoplasm"/>
    <property type="evidence" value="ECO:0007669"/>
    <property type="project" value="UniProtKB-SubCell"/>
</dbReference>
<dbReference type="GO" id="GO:0005634">
    <property type="term" value="C:nucleus"/>
    <property type="evidence" value="ECO:0007669"/>
    <property type="project" value="UniProtKB-SubCell"/>
</dbReference>
<dbReference type="GO" id="GO:0043169">
    <property type="term" value="F:cation binding"/>
    <property type="evidence" value="ECO:0000250"/>
    <property type="project" value="UniProtKB"/>
</dbReference>
<dbReference type="GO" id="GO:0046872">
    <property type="term" value="F:metal ion binding"/>
    <property type="evidence" value="ECO:0007669"/>
    <property type="project" value="UniProtKB-KW"/>
</dbReference>
<dbReference type="GO" id="GO:0004535">
    <property type="term" value="F:poly(A)-specific ribonuclease activity"/>
    <property type="evidence" value="ECO:0007669"/>
    <property type="project" value="UniProtKB-EC"/>
</dbReference>
<dbReference type="GO" id="GO:0003723">
    <property type="term" value="F:RNA binding"/>
    <property type="evidence" value="ECO:0007669"/>
    <property type="project" value="UniProtKB-KW"/>
</dbReference>
<dbReference type="GO" id="GO:0006397">
    <property type="term" value="P:mRNA processing"/>
    <property type="evidence" value="ECO:0007669"/>
    <property type="project" value="UniProtKB-KW"/>
</dbReference>
<dbReference type="GO" id="GO:1905392">
    <property type="term" value="P:plant organ morphogenesis"/>
    <property type="evidence" value="ECO:0000315"/>
    <property type="project" value="TAIR"/>
</dbReference>
<dbReference type="FunFam" id="3.30.420.10:FF:000471">
    <property type="match status" value="1"/>
</dbReference>
<dbReference type="FunFam" id="3.30.420.10:FF:000346">
    <property type="entry name" value="Polynucleotidyl transferase, ribonuclease H-like superfamily protein"/>
    <property type="match status" value="1"/>
</dbReference>
<dbReference type="Gene3D" id="3.30.420.10">
    <property type="entry name" value="Ribonuclease H-like superfamily/Ribonuclease H"/>
    <property type="match status" value="2"/>
</dbReference>
<dbReference type="InterPro" id="IPR051181">
    <property type="entry name" value="CAF1_poly(A)_ribonucleases"/>
</dbReference>
<dbReference type="InterPro" id="IPR006941">
    <property type="entry name" value="RNase_CAF1"/>
</dbReference>
<dbReference type="InterPro" id="IPR012337">
    <property type="entry name" value="RNaseH-like_sf"/>
</dbReference>
<dbReference type="InterPro" id="IPR036397">
    <property type="entry name" value="RNaseH_sf"/>
</dbReference>
<dbReference type="PANTHER" id="PTHR15092">
    <property type="entry name" value="POLY A -SPECIFIC RIBONUCLEASE/TARGET OF EGR1, MEMBER 1"/>
    <property type="match status" value="1"/>
</dbReference>
<dbReference type="PANTHER" id="PTHR15092:SF42">
    <property type="entry name" value="POLY(A)-SPECIFIC RIBONUCLEASE PARN-LIKE"/>
    <property type="match status" value="1"/>
</dbReference>
<dbReference type="Pfam" id="PF04857">
    <property type="entry name" value="CAF1"/>
    <property type="match status" value="1"/>
</dbReference>
<dbReference type="SUPFAM" id="SSF53098">
    <property type="entry name" value="Ribonuclease H-like"/>
    <property type="match status" value="1"/>
</dbReference>
<name>PARNL_ARATH</name>
<evidence type="ECO:0000250" key="1"/>
<evidence type="ECO:0000250" key="2">
    <source>
        <dbReference type="UniProtKB" id="O95453"/>
    </source>
</evidence>
<evidence type="ECO:0000256" key="3">
    <source>
        <dbReference type="SAM" id="MobiDB-lite"/>
    </source>
</evidence>
<evidence type="ECO:0000305" key="4"/>
<sequence>MQRRFLSSISATAGNTKTLNQGRWSVKQVKKSNFHVTLDEIRTSIDSSDFIALSLQNTGSYAAAWHRVSAIDTPQTSYLKAKYAAERYQILQFALCPFSLQGSKLTVHPYNFHLFPRDELKCGMPSYSFSCQASRLTAMAREGFDFNICIYEGISYLSRAQESASKFLSENPILADSVTVSSSPATVADTVFVGRIRSRVKNWRQSCIDSGSKTGDDDLVSSLRRLVLGSEQYGSRLCLTIDVCSERQVQLILEMLTEFSDDVVPLLVASKSRGTQAVRTVFMSSKEDKDLFKRELKDLEKEENRRVRGFREVVDFISSSQKPVVSQNYLSDFTSIHAKFLGPLPSNVDDFSSSLSSAFPNVVDLSQFMKEISPLSNISNLPAAMSSLNRFFAPVDVEVANQGCPVKLDEGHQSHGQNAVMISQLFAKLCTIQKSDLSTIQSNEDFQALASDEHANSVTSCSKNAGDENVKVWSKNSRRVSSENLVFIWGLGKKMTAAKLKNVLQKSHPVFAREFDVKYIDRSSAILVFWESGPSETFLSAVNNEEQLDGSLREMVAEGLRGAGYETYKRACRLGFWEADLAESLDKALESSDTDPDSDTKPSEIDWSNELAINFDEL</sequence>
<accession>Q8W4C3</accession>
<accession>Q9LSV7</accession>
<protein>
    <recommendedName>
        <fullName>Poly(A)-specific ribonuclease PARN-like</fullName>
        <ecNumber>3.1.13.4</ecNumber>
    </recommendedName>
    <alternativeName>
        <fullName>Polyadenylate-specific ribonuclease-like protein</fullName>
    </alternativeName>
</protein>
<proteinExistence type="evidence at transcript level"/>
<organism>
    <name type="scientific">Arabidopsis thaliana</name>
    <name type="common">Mouse-ear cress</name>
    <dbReference type="NCBI Taxonomy" id="3702"/>
    <lineage>
        <taxon>Eukaryota</taxon>
        <taxon>Viridiplantae</taxon>
        <taxon>Streptophyta</taxon>
        <taxon>Embryophyta</taxon>
        <taxon>Tracheophyta</taxon>
        <taxon>Spermatophyta</taxon>
        <taxon>Magnoliopsida</taxon>
        <taxon>eudicotyledons</taxon>
        <taxon>Gunneridae</taxon>
        <taxon>Pentapetalae</taxon>
        <taxon>rosids</taxon>
        <taxon>malvids</taxon>
        <taxon>Brassicales</taxon>
        <taxon>Brassicaceae</taxon>
        <taxon>Camelineae</taxon>
        <taxon>Arabidopsis</taxon>
    </lineage>
</organism>
<feature type="chain" id="PRO_0000371550" description="Poly(A)-specific ribonuclease PARN-like">
    <location>
        <begin position="1"/>
        <end position="618"/>
    </location>
</feature>
<feature type="region of interest" description="Disordered" evidence="3">
    <location>
        <begin position="588"/>
        <end position="607"/>
    </location>
</feature>
<feature type="binding site" evidence="2">
    <location>
        <position position="54"/>
    </location>
    <ligand>
        <name>a divalent metal cation</name>
        <dbReference type="ChEBI" id="CHEBI:60240"/>
    </ligand>
</feature>
<feature type="binding site" evidence="2">
    <location>
        <position position="56"/>
    </location>
    <ligand>
        <name>a divalent metal cation</name>
        <dbReference type="ChEBI" id="CHEBI:60240"/>
    </ligand>
</feature>
<feature type="binding site" evidence="2">
    <location>
        <position position="332"/>
    </location>
    <ligand>
        <name>a divalent metal cation</name>
        <dbReference type="ChEBI" id="CHEBI:60240"/>
    </ligand>
</feature>
<feature type="binding site" evidence="2">
    <location>
        <position position="418"/>
    </location>
    <ligand>
        <name>a divalent metal cation</name>
        <dbReference type="ChEBI" id="CHEBI:60240"/>
    </ligand>
</feature>
<reference key="1">
    <citation type="journal article" date="2000" name="DNA Res.">
        <title>Structural analysis of Arabidopsis thaliana chromosome 3. I. Sequence features of the regions of 4,504,864 bp covered by sixty P1 and TAC clones.</title>
        <authorList>
            <person name="Sato S."/>
            <person name="Nakamura Y."/>
            <person name="Kaneko T."/>
            <person name="Katoh T."/>
            <person name="Asamizu E."/>
            <person name="Tabata S."/>
        </authorList>
    </citation>
    <scope>NUCLEOTIDE SEQUENCE [LARGE SCALE GENOMIC DNA]</scope>
    <source>
        <strain>cv. Columbia</strain>
    </source>
</reference>
<reference key="2">
    <citation type="journal article" date="2017" name="Plant J.">
        <title>Araport11: a complete reannotation of the Arabidopsis thaliana reference genome.</title>
        <authorList>
            <person name="Cheng C.Y."/>
            <person name="Krishnakumar V."/>
            <person name="Chan A.P."/>
            <person name="Thibaud-Nissen F."/>
            <person name="Schobel S."/>
            <person name="Town C.D."/>
        </authorList>
    </citation>
    <scope>GENOME REANNOTATION</scope>
    <source>
        <strain>cv. Columbia</strain>
    </source>
</reference>
<reference key="3">
    <citation type="journal article" date="2003" name="Science">
        <title>Empirical analysis of transcriptional activity in the Arabidopsis genome.</title>
        <authorList>
            <person name="Yamada K."/>
            <person name="Lim J."/>
            <person name="Dale J.M."/>
            <person name="Chen H."/>
            <person name="Shinn P."/>
            <person name="Palm C.J."/>
            <person name="Southwick A.M."/>
            <person name="Wu H.C."/>
            <person name="Kim C.J."/>
            <person name="Nguyen M."/>
            <person name="Pham P.K."/>
            <person name="Cheuk R.F."/>
            <person name="Karlin-Newmann G."/>
            <person name="Liu S.X."/>
            <person name="Lam B."/>
            <person name="Sakano H."/>
            <person name="Wu T."/>
            <person name="Yu G."/>
            <person name="Miranda M."/>
            <person name="Quach H.L."/>
            <person name="Tripp M."/>
            <person name="Chang C.H."/>
            <person name="Lee J.M."/>
            <person name="Toriumi M.J."/>
            <person name="Chan M.M."/>
            <person name="Tang C.C."/>
            <person name="Onodera C.S."/>
            <person name="Deng J.M."/>
            <person name="Akiyama K."/>
            <person name="Ansari Y."/>
            <person name="Arakawa T."/>
            <person name="Banh J."/>
            <person name="Banno F."/>
            <person name="Bowser L."/>
            <person name="Brooks S.Y."/>
            <person name="Carninci P."/>
            <person name="Chao Q."/>
            <person name="Choy N."/>
            <person name="Enju A."/>
            <person name="Goldsmith A.D."/>
            <person name="Gurjal M."/>
            <person name="Hansen N.F."/>
            <person name="Hayashizaki Y."/>
            <person name="Johnson-Hopson C."/>
            <person name="Hsuan V.W."/>
            <person name="Iida K."/>
            <person name="Karnes M."/>
            <person name="Khan S."/>
            <person name="Koesema E."/>
            <person name="Ishida J."/>
            <person name="Jiang P.X."/>
            <person name="Jones T."/>
            <person name="Kawai J."/>
            <person name="Kamiya A."/>
            <person name="Meyers C."/>
            <person name="Nakajima M."/>
            <person name="Narusaka M."/>
            <person name="Seki M."/>
            <person name="Sakurai T."/>
            <person name="Satou M."/>
            <person name="Tamse R."/>
            <person name="Vaysberg M."/>
            <person name="Wallender E.K."/>
            <person name="Wong C."/>
            <person name="Yamamura Y."/>
            <person name="Yuan S."/>
            <person name="Shinozaki K."/>
            <person name="Davis R.W."/>
            <person name="Theologis A."/>
            <person name="Ecker J.R."/>
        </authorList>
    </citation>
    <scope>NUCLEOTIDE SEQUENCE [LARGE SCALE MRNA]</scope>
    <source>
        <strain>cv. Columbia</strain>
    </source>
</reference>
<gene>
    <name type="ordered locus">At3g25430</name>
    <name type="ORF">MWL2.4</name>
</gene>
<keyword id="KW-0963">Cytoplasm</keyword>
<keyword id="KW-0269">Exonuclease</keyword>
<keyword id="KW-0378">Hydrolase</keyword>
<keyword id="KW-0479">Metal-binding</keyword>
<keyword id="KW-0507">mRNA processing</keyword>
<keyword id="KW-0540">Nuclease</keyword>
<keyword id="KW-0539">Nucleus</keyword>
<keyword id="KW-1185">Reference proteome</keyword>
<keyword id="KW-0694">RNA-binding</keyword>
<comment type="function">
    <text evidence="1">3'-exoribonuclease that has a preference for poly(A) tails of mRNAs, thereby efficiently degrading poly(A) tails. Exonucleolytic degradation of the poly(A) tail is often the first step in the decay of eukaryotic mRNAs (By similarity).</text>
</comment>
<comment type="catalytic activity">
    <reaction>
        <text>Exonucleolytic cleavage of poly(A) to 5'-AMP.</text>
        <dbReference type="EC" id="3.1.13.4"/>
    </reaction>
</comment>
<comment type="cofactor">
    <cofactor evidence="2">
        <name>a divalent metal cation</name>
        <dbReference type="ChEBI" id="CHEBI:60240"/>
    </cofactor>
</comment>
<comment type="subcellular location">
    <subcellularLocation>
        <location evidence="1">Nucleus</location>
    </subcellularLocation>
    <subcellularLocation>
        <location evidence="1">Cytoplasm</location>
    </subcellularLocation>
</comment>
<comment type="similarity">
    <text evidence="4">Belongs to the CAF1 family.</text>
</comment>
<comment type="sequence caution" evidence="4">
    <conflict type="erroneous gene model prediction">
        <sequence resource="EMBL-CDS" id="BAB01314"/>
    </conflict>
    <text>The predicted gene has been split into 2 genes: At3g25430 and At3g25440.</text>
</comment>